<gene>
    <name type="primary">ttgG</name>
</gene>
<dbReference type="EMBL" id="HM626202">
    <property type="protein sequence ID" value="AAK69563.2"/>
    <property type="molecule type" value="Genomic_DNA"/>
</dbReference>
<dbReference type="RefSeq" id="YP_004750623.1">
    <property type="nucleotide sequence ID" value="NC_015855.1"/>
</dbReference>
<dbReference type="SMR" id="Q93PU5"/>
<dbReference type="TCDB" id="2.A.6.2.11">
    <property type="family name" value="the resistance-nodulation-cell division (rnd) superfamily"/>
</dbReference>
<dbReference type="Proteomes" id="UP000006503">
    <property type="component" value="Plasmid pGRT1"/>
</dbReference>
<dbReference type="GO" id="GO:0005886">
    <property type="term" value="C:plasma membrane"/>
    <property type="evidence" value="ECO:0007669"/>
    <property type="project" value="UniProtKB-SubCell"/>
</dbReference>
<dbReference type="GO" id="GO:0022857">
    <property type="term" value="F:transmembrane transporter activity"/>
    <property type="evidence" value="ECO:0007669"/>
    <property type="project" value="InterPro"/>
</dbReference>
<dbReference type="GO" id="GO:0046677">
    <property type="term" value="P:response to antibiotic"/>
    <property type="evidence" value="ECO:0007669"/>
    <property type="project" value="TreeGrafter"/>
</dbReference>
<dbReference type="FunFam" id="2.40.420.20:FF:000001">
    <property type="entry name" value="Efflux RND transporter periplasmic adaptor subunit"/>
    <property type="match status" value="1"/>
</dbReference>
<dbReference type="Gene3D" id="2.40.30.170">
    <property type="match status" value="1"/>
</dbReference>
<dbReference type="Gene3D" id="2.40.420.20">
    <property type="match status" value="1"/>
</dbReference>
<dbReference type="Gene3D" id="2.40.50.100">
    <property type="match status" value="1"/>
</dbReference>
<dbReference type="Gene3D" id="1.10.287.470">
    <property type="entry name" value="Helix hairpin bin"/>
    <property type="match status" value="1"/>
</dbReference>
<dbReference type="InterPro" id="IPR043602">
    <property type="entry name" value="CusB-like_dom_1"/>
</dbReference>
<dbReference type="InterPro" id="IPR032317">
    <property type="entry name" value="CusB_D23"/>
</dbReference>
<dbReference type="InterPro" id="IPR051160">
    <property type="entry name" value="MFP_Efflux"/>
</dbReference>
<dbReference type="InterPro" id="IPR006143">
    <property type="entry name" value="RND_pump_MFP"/>
</dbReference>
<dbReference type="NCBIfam" id="TIGR01730">
    <property type="entry name" value="RND_mfp"/>
    <property type="match status" value="1"/>
</dbReference>
<dbReference type="PANTHER" id="PTHR30158">
    <property type="entry name" value="ACRA/E-RELATED COMPONENT OF DRUG EFFLUX TRANSPORTER"/>
    <property type="match status" value="1"/>
</dbReference>
<dbReference type="PANTHER" id="PTHR30158:SF3">
    <property type="entry name" value="MULTIDRUG EFFLUX PUMP SUBUNIT ACRA-RELATED"/>
    <property type="match status" value="1"/>
</dbReference>
<dbReference type="Pfam" id="PF00529">
    <property type="entry name" value="CusB_dom_1"/>
    <property type="match status" value="1"/>
</dbReference>
<dbReference type="Pfam" id="PF16576">
    <property type="entry name" value="HlyD_D23"/>
    <property type="match status" value="1"/>
</dbReference>
<dbReference type="SUPFAM" id="SSF111369">
    <property type="entry name" value="HlyD-like secretion proteins"/>
    <property type="match status" value="1"/>
</dbReference>
<dbReference type="PROSITE" id="PS51257">
    <property type="entry name" value="PROKAR_LIPOPROTEIN"/>
    <property type="match status" value="1"/>
</dbReference>
<name>TTGG_PSEPT</name>
<feature type="signal peptide" evidence="2">
    <location>
        <begin position="1"/>
        <end position="32"/>
    </location>
</feature>
<feature type="chain" id="PRO_0000018720" description="Toluene efflux pump periplasmic linker protein TtgG">
    <location>
        <begin position="33"/>
        <end position="391"/>
    </location>
</feature>
<feature type="coiled-coil region" evidence="1">
    <location>
        <begin position="107"/>
        <end position="136"/>
    </location>
</feature>
<feature type="lipid moiety-binding region" description="N-palmitoyl cysteine" evidence="2">
    <location>
        <position position="33"/>
    </location>
</feature>
<feature type="lipid moiety-binding region" description="S-diacylglycerol cysteine" evidence="2">
    <location>
        <position position="33"/>
    </location>
</feature>
<proteinExistence type="evidence at transcript level"/>
<evidence type="ECO:0000255" key="1"/>
<evidence type="ECO:0000255" key="2">
    <source>
        <dbReference type="PROSITE-ProRule" id="PRU00303"/>
    </source>
</evidence>
<evidence type="ECO:0000269" key="3">
    <source>
    </source>
</evidence>
<evidence type="ECO:0000269" key="4">
    <source>
    </source>
</evidence>
<evidence type="ECO:0000305" key="5"/>
<protein>
    <recommendedName>
        <fullName>Toluene efflux pump periplasmic linker protein TtgG</fullName>
    </recommendedName>
</protein>
<sequence length="391" mass="42543">MRAERWSQTVRQIRSPRALRVIPLTALMLISGCGEKEQVSSATPPPDVGVYTVRAQALTLTTDLPGRTSAFRVAEVRPQVSGILQKRSFVEGAEVKLGQQLYQIDPRTYEAQLRRAEANRTSAQNLARRYETLLKTKAVSKQQYDDALAAWKQAEADYQVARIDVQYTRVLSPISGRIGRSTVTEGALVTNGQAQSLATVTQLDPIYVDVTQPITKLLGLQKALESGRLQKTGENQAEVSLTLDDGSAYPLPGTLKFSEVSVDPTTGSVTLRAEFPNPNRKLLPGMFVHALLKEGVQNAAILVPQQAISRDTRGVPSVWVVKADNTVESREIQTLRTVGNAWLISNGVTEGERIITEGVQRVRSGIAVNAVEAKNVNLVDGFAATTEASAN</sequence>
<comment type="function">
    <text>The periplasmic linker component of an organic solvent efflux pump. Involved in export of a number of organic solvents, including toluene and styrene. This is the most important solvent efflux pump in this strain, although it can export AMP and some antibiotics.</text>
</comment>
<comment type="subcellular location">
    <subcellularLocation>
        <location evidence="5">Cell inner membrane</location>
        <topology evidence="2">Lipid-anchor</topology>
    </subcellularLocation>
</comment>
<comment type="induction">
    <text evidence="3 4">Constitutively expressed; the ttgGHI operon is further induced about 4-fold by toluene and styrene but not by antibiotics.</text>
</comment>
<comment type="similarity">
    <text evidence="5">Belongs to the membrane fusion protein (MFP) (TC 8.A.1) family.</text>
</comment>
<geneLocation type="plasmid">
    <name>pGRT1</name>
</geneLocation>
<keyword id="KW-0997">Cell inner membrane</keyword>
<keyword id="KW-1003">Cell membrane</keyword>
<keyword id="KW-0175">Coiled coil</keyword>
<keyword id="KW-0449">Lipoprotein</keyword>
<keyword id="KW-0472">Membrane</keyword>
<keyword id="KW-0564">Palmitate</keyword>
<keyword id="KW-0614">Plasmid</keyword>
<keyword id="KW-0732">Signal</keyword>
<keyword id="KW-0813">Transport</keyword>
<organism>
    <name type="scientific">Pseudomonas putida (strain DOT-T1E)</name>
    <dbReference type="NCBI Taxonomy" id="1196325"/>
    <lineage>
        <taxon>Bacteria</taxon>
        <taxon>Pseudomonadati</taxon>
        <taxon>Pseudomonadota</taxon>
        <taxon>Gammaproteobacteria</taxon>
        <taxon>Pseudomonadales</taxon>
        <taxon>Pseudomonadaceae</taxon>
        <taxon>Pseudomonas</taxon>
    </lineage>
</organism>
<accession>Q93PU5</accession>
<reference key="1">
    <citation type="journal article" date="2001" name="J. Bacteriol.">
        <title>Three efflux pumps are required to provide efficient tolerance to toluene in Pseudomonas putida DOT-T1E.</title>
        <authorList>
            <person name="Rojas A."/>
            <person name="Duque E."/>
            <person name="Mosqueda G."/>
            <person name="Golden G."/>
            <person name="Hurtado A."/>
            <person name="Ramos J.L."/>
            <person name="Segura A."/>
        </authorList>
    </citation>
    <scope>NUCLEOTIDE SEQUENCE [GENOMIC DNA]</scope>
    <scope>EFFLUX PUMP SUBSTRATES</scope>
    <scope>INDUCTION</scope>
    <source>
        <strain>DOT-T1E</strain>
    </source>
</reference>
<reference key="2">
    <citation type="journal article" date="2011" name="Environ. Microbiol.">
        <title>The pGRT1 plasmid of Pseudomonas putida DOT-T1E encodes functions relevant for survival under harsh conditions in the environment.</title>
        <authorList>
            <person name="Molina L."/>
            <person name="Duque E."/>
            <person name="Gomez M.J."/>
            <person name="Krell T."/>
            <person name="Lacal J."/>
            <person name="Garcia-Puente A."/>
            <person name="Garcia V."/>
            <person name="Matilla M.A."/>
            <person name="Ramos J.L."/>
            <person name="Segura A."/>
        </authorList>
    </citation>
    <scope>NUCLEOTIDE SEQUENCE [LARGE SCALE GENOMIC DNA]</scope>
    <scope>SEQUENCE REVISION TO 221; 262 AND 321</scope>
    <source>
        <strain>DOT-T1E</strain>
    </source>
</reference>
<reference key="3">
    <citation type="journal article" date="2013" name="Microb. Biotechnol.">
        <title>Metabolic potential of the organic-solvent tolerant Pseudomonas putida DOT-T1E deduced from its annotated genome.</title>
        <authorList>
            <person name="Udaondo Z."/>
            <person name="Molina L."/>
            <person name="Daniels C."/>
            <person name="Gomez M.J."/>
            <person name="Molina-Henares M.A."/>
            <person name="Matilla M.A."/>
            <person name="Roca A."/>
            <person name="Fernandez M."/>
            <person name="Duque E."/>
            <person name="Segura A."/>
            <person name="Ramos J.L."/>
        </authorList>
    </citation>
    <scope>NUCLEOTIDE SEQUENCE [LARGE SCALE GENOMIC DNA]</scope>
    <source>
        <strain>DOT-T1E</strain>
    </source>
</reference>
<reference key="4">
    <citation type="journal article" date="2003" name="J. Bacteriol.">
        <title>In vivo and in vitro evidence that TtgV is the specific regulator of the TtgGHI multidrug and solvent efflux pump of Pseudomonas putida.</title>
        <authorList>
            <person name="Rojas A."/>
            <person name="Segura A."/>
            <person name="Guazzaroni M.E."/>
            <person name="Teran W."/>
            <person name="Hurtado A."/>
            <person name="Gallegos M.T."/>
            <person name="Ramos J.L."/>
        </authorList>
    </citation>
    <scope>OPERON ORGANIZATION</scope>
    <scope>INDUCTION</scope>
    <source>
        <strain>DOT-T1E</strain>
    </source>
</reference>